<dbReference type="EMBL" id="J02459">
    <property type="status" value="NOT_ANNOTATED_CDS"/>
    <property type="molecule type" value="Genomic_DNA"/>
</dbReference>
<dbReference type="EMBL" id="U37314">
    <property type="protein sequence ID" value="AAC48862.1"/>
    <property type="molecule type" value="Genomic_DNA"/>
</dbReference>
<dbReference type="PIR" id="JN0750">
    <property type="entry name" value="JN0750"/>
</dbReference>
<dbReference type="RefSeq" id="YP_001551744.1">
    <property type="nucleotide sequence ID" value="NC_001416.1"/>
</dbReference>
<dbReference type="SMR" id="Q37935"/>
<dbReference type="IntAct" id="Q37935">
    <property type="interactions" value="3"/>
</dbReference>
<dbReference type="TCDB" id="1.M.1.1.1">
    <property type="family name" value="the rz/rz1 spanin1 (rz(1)) family"/>
</dbReference>
<dbReference type="GeneID" id="5739319"/>
<dbReference type="KEGG" id="vg:5739319"/>
<dbReference type="Proteomes" id="UP000001711">
    <property type="component" value="Genome"/>
</dbReference>
<dbReference type="GO" id="GO:0039662">
    <property type="term" value="C:host cell outer membrane"/>
    <property type="evidence" value="ECO:0000314"/>
    <property type="project" value="CACAO"/>
</dbReference>
<dbReference type="GO" id="GO:0020002">
    <property type="term" value="C:host cell plasma membrane"/>
    <property type="evidence" value="ECO:0007669"/>
    <property type="project" value="UniProtKB-SubCell"/>
</dbReference>
<dbReference type="GO" id="GO:0016020">
    <property type="term" value="C:membrane"/>
    <property type="evidence" value="ECO:0007669"/>
    <property type="project" value="UniProtKB-KW"/>
</dbReference>
<dbReference type="GO" id="GO:0061025">
    <property type="term" value="P:membrane fusion"/>
    <property type="evidence" value="ECO:0000314"/>
    <property type="project" value="CACAO"/>
</dbReference>
<dbReference type="GO" id="GO:0045861">
    <property type="term" value="P:negative regulation of proteolysis"/>
    <property type="evidence" value="ECO:0000314"/>
    <property type="project" value="CACAO"/>
</dbReference>
<dbReference type="GO" id="GO:0019076">
    <property type="term" value="P:viral release from host cell"/>
    <property type="evidence" value="ECO:0000314"/>
    <property type="project" value="CACAO"/>
</dbReference>
<dbReference type="GO" id="GO:0090680">
    <property type="term" value="P:viral release via disruption of host outer membrane"/>
    <property type="evidence" value="ECO:0000315"/>
    <property type="project" value="CACAO"/>
</dbReference>
<dbReference type="InterPro" id="IPR010346">
    <property type="entry name" value="O-spanin"/>
</dbReference>
<dbReference type="Pfam" id="PF06085">
    <property type="entry name" value="Rz1"/>
    <property type="match status" value="1"/>
</dbReference>
<proteinExistence type="evidence at protein level"/>
<organism>
    <name type="scientific">Escherichia phage lambda</name>
    <name type="common">Bacteriophage lambda</name>
    <dbReference type="NCBI Taxonomy" id="2681611"/>
    <lineage>
        <taxon>Viruses</taxon>
        <taxon>Duplodnaviria</taxon>
        <taxon>Heunggongvirae</taxon>
        <taxon>Uroviricota</taxon>
        <taxon>Caudoviricetes</taxon>
        <taxon>Lambdavirus</taxon>
        <taxon>Lambdavirus lambda</taxon>
    </lineage>
</organism>
<feature type="signal peptide" evidence="6">
    <location>
        <begin position="1"/>
        <end position="19"/>
    </location>
</feature>
<feature type="chain" id="PRO_0000003363" description="Spanin, outer lipoprotein subunit">
    <location>
        <begin position="20"/>
        <end position="60"/>
    </location>
</feature>
<feature type="topological domain" description="Periplasmic" evidence="2">
    <location>
        <begin position="20"/>
        <end position="60"/>
    </location>
</feature>
<feature type="region of interest" description="Proline-rich" evidence="5">
    <location>
        <begin position="32"/>
        <end position="44"/>
    </location>
</feature>
<feature type="lipid moiety-binding region" description="N-palmitoyl cysteine; by host" evidence="6">
    <location>
        <position position="20"/>
    </location>
</feature>
<feature type="lipid moiety-binding region" description="S-diacylglycerol cysteine; by host" evidence="6">
    <location>
        <position position="20"/>
    </location>
</feature>
<feature type="disulfide bond" description="Interchain" evidence="3">
    <location>
        <position position="29"/>
    </location>
</feature>
<feature type="mutagenesis site" description="Complete loss of disulfide-linked homodimers." evidence="3">
    <original>C</original>
    <variation>S</variation>
    <location>
        <position position="29"/>
    </location>
</feature>
<evidence type="ECO:0000269" key="1">
    <source>
    </source>
</evidence>
<evidence type="ECO:0000269" key="2">
    <source>
    </source>
</evidence>
<evidence type="ECO:0000269" key="3">
    <source>
    </source>
</evidence>
<evidence type="ECO:0000269" key="4">
    <source>
    </source>
</evidence>
<evidence type="ECO:0000269" key="5">
    <source>
    </source>
</evidence>
<evidence type="ECO:0000269" key="6">
    <source>
    </source>
</evidence>
<evidence type="ECO:0000303" key="7">
    <source>
    </source>
</evidence>
<evidence type="ECO:0000303" key="8">
    <source>
    </source>
</evidence>
<evidence type="ECO:0000303" key="9">
    <source>
    </source>
</evidence>
<evidence type="ECO:0000305" key="10"/>
<evidence type="ECO:0000305" key="11">
    <source>
    </source>
</evidence>
<keyword id="KW-0204">Cytolysis</keyword>
<keyword id="KW-0903">Direct protein sequencing</keyword>
<keyword id="KW-1015">Disulfide bond</keyword>
<keyword id="KW-0578">Host cell lysis by virus</keyword>
<keyword id="KW-1033">Host cell outer membrane</keyword>
<keyword id="KW-1043">Host membrane</keyword>
<keyword id="KW-0449">Lipoprotein</keyword>
<keyword id="KW-0472">Membrane</keyword>
<keyword id="KW-0564">Palmitate</keyword>
<keyword id="KW-1185">Reference proteome</keyword>
<keyword id="KW-0732">Signal</keyword>
<keyword id="KW-1188">Viral release from host cell</keyword>
<organismHost>
    <name type="scientific">Escherichia coli</name>
    <dbReference type="NCBI Taxonomy" id="562"/>
</organismHost>
<reference key="1">
    <citation type="journal article" date="1982" name="J. Mol. Biol.">
        <title>Nucleotide sequence of bacteriophage lambda DNA.</title>
        <authorList>
            <person name="Sanger F."/>
            <person name="Coulson A.R."/>
            <person name="Hong G.F."/>
            <person name="Hill D.F."/>
            <person name="Petersen G.B."/>
        </authorList>
    </citation>
    <scope>NUCLEOTIDE SEQUENCE [LARGE SCALE GENOMIC DNA]</scope>
</reference>
<reference key="2">
    <citation type="journal article" date="1993" name="Gene">
        <title>Expression of the Rz gene and the overlapping Rz1 reading frame present at the right end of the bacteriophage lambda genome.</title>
        <authorList>
            <person name="Hanych B."/>
            <person name="Kedzierska S."/>
            <person name="Walderich B."/>
            <person name="Uznanski B."/>
            <person name="Taylor A."/>
        </authorList>
    </citation>
    <scope>NUCLEOTIDE SEQUENCE [GENOMIC DNA]</scope>
    <scope>IDENTIFICATION</scope>
</reference>
<reference key="3">
    <citation type="journal article" date="1996" name="Gene">
        <title>The Rz1 gene product of bacteriophage lambda is a lipoprotein localized in the outer membrane of Escherichia coli.</title>
        <authorList>
            <person name="Kedzierska S."/>
            <person name="Wawrzynow A."/>
            <person name="Taylor A."/>
        </authorList>
    </citation>
    <scope>PROTEIN SEQUENCE OF 20-27</scope>
    <scope>CHARACTERIZATION</scope>
    <scope>DIACYLGLYCEROL AT CYS-20</scope>
    <scope>PALMITOYLATION AT CYS-20</scope>
</reference>
<reference key="4">
    <citation type="journal article" date="1996" name="Microb. Drug Resist.">
        <title>Bacteriophage lambda lysis gene product modified and inserted into Escherichia coli outer membrane: Rz1 lipoprotein.</title>
        <authorList>
            <person name="Taylor A."/>
            <person name="Kedzierska S."/>
            <person name="Wawrzynow A."/>
        </authorList>
    </citation>
    <scope>CHARACTERIZATION</scope>
</reference>
<reference key="5">
    <citation type="journal article" date="2000" name="Eur. J. Biochem.">
        <title>Membrane fusion by proline-rich Rz1 lipoprotein, the bacteriophage lambda Rz1 gene product.</title>
        <authorList>
            <person name="Bryl K."/>
            <person name="Kedzierska S."/>
            <person name="Laskowska M."/>
            <person name="Taylor A."/>
        </authorList>
    </citation>
    <scope>CHARACTERIZATION</scope>
</reference>
<reference key="6">
    <citation type="journal article" date="2008" name="Mol. Microbiol.">
        <title>The final step in the phage infection cycle: the Rz and Rz1 lysis proteins link the inner and outer membranes.</title>
        <authorList>
            <person name="Berry J."/>
            <person name="Summer E.J."/>
            <person name="Struck D.K."/>
            <person name="Young R."/>
        </authorList>
    </citation>
    <scope>CHARACTERIZATION</scope>
    <scope>SUBCELLULAR LOCATION</scope>
</reference>
<reference key="7">
    <citation type="journal article" date="2010" name="Protein Sci.">
        <title>The lambda spanin components Rz and Rz1 undergo tertiary and quaternary rearrangements upon complex formation.</title>
        <authorList>
            <person name="Berry J."/>
            <person name="Savva C."/>
            <person name="Holzenburg A."/>
            <person name="Young R."/>
        </authorList>
    </citation>
    <scope>SUBUNIT</scope>
</reference>
<reference key="8">
    <citation type="journal article" date="2012" name="J. Bacteriol.">
        <title>The spanin complex is essential for lambda lysis.</title>
        <authorList>
            <person name="Berry J."/>
            <person name="Rajaure M."/>
            <person name="Pang T."/>
            <person name="Young R."/>
        </authorList>
    </citation>
    <scope>FUNCTION</scope>
</reference>
<reference key="9">
    <citation type="journal article" date="2013" name="Mol. Microbiol.">
        <title>Spanin function requires subunit homodimerization through intermolecular disulfide bonds.</title>
        <authorList>
            <person name="Berry J.D."/>
            <person name="Rajaure M."/>
            <person name="Young R."/>
        </authorList>
    </citation>
    <scope>FUNCTION</scope>
    <scope>SUBUNIT</scope>
    <scope>DISULFIDE BOND</scope>
    <scope>SUBCELLULAR LOCATION</scope>
    <scope>MUTAGENESIS OF CYS-29</scope>
</reference>
<reference key="10">
    <citation type="journal article" date="2013" name="Curr. Opin. Microbiol.">
        <title>Phage lysis: do we have the hole story yet?</title>
        <authorList>
            <person name="Young R."/>
        </authorList>
    </citation>
    <scope>REVIEW</scope>
</reference>
<reference key="11">
    <citation type="journal article" date="2015" name="Proc. Natl. Acad. Sci. U.S.A.">
        <title>Membrane fusion during phage lysis.</title>
        <authorList>
            <person name="Rajaure M."/>
            <person name="Berry J."/>
            <person name="Kongari R."/>
            <person name="Cahill J."/>
            <person name="Young R."/>
        </authorList>
    </citation>
    <scope>FUNCTION</scope>
</reference>
<reference key="12">
    <citation type="journal article" date="2017" name="G3 (Bethesda)">
        <title>Genetic Analysis of the Lambda Spanins Rz and Rz1: Identification of Functional Domains.</title>
        <authorList>
            <person name="Cahill J."/>
            <person name="Rajaure M."/>
            <person name="O'Leary C."/>
            <person name="Sloan J."/>
            <person name="Marrufo A."/>
            <person name="Holt A."/>
            <person name="Kulkarni A."/>
            <person name="Hernandez O."/>
            <person name="Young R."/>
        </authorList>
    </citation>
    <scope>DOMAIN</scope>
</reference>
<sequence>MLKLKMMLCVMMLPLVVVGCTSKQSVSQCVKPPPPPAWIMQPPPDWQTPLNGIISPSERG</sequence>
<name>SPAN2_LAMBD</name>
<accession>Q37935</accession>
<comment type="function">
    <text evidence="2 3 4">Component of the spanin complex that disrupts the host outer membrane and participates in cell lysis during virus exit (PubMed:22904283, PubMed:23387988, PubMed:25870259). The spanin complex conducts the final step in host lysis by disrupting the outer membrane after holin and endolysin action have permeabilized the inner membrane and degraded the host peptidoglycans (PubMed:25870259). Host outer membrane disruption due to local fusion between the inner and outer membrane performed by the spanin complex (PubMed:25870259).</text>
</comment>
<comment type="subunit">
    <text evidence="3 11">Homodimer; disulfide-linked (Probable) (PubMed:23387988). Interacts (via C-terminus) with the spanin inner membrane subunit (via C-terminus). Part of the spanin complex which spans the entire periplasmic space (PubMed:23387988). The spanin complex is composed of one homodimer of the i-spanin linked by intermolecular disulfide bonds involving two Cys residues and one homodimer of the o-spanin covalently linked by an intermolecular disulfide bond involving one Cys (PubMed:23387988).</text>
</comment>
<comment type="subcellular location">
    <subcellularLocation>
        <location evidence="1 3">Host cell outer membrane</location>
        <topology evidence="1 3">Lipid-anchor</topology>
        <orientation evidence="1 3">Periplasmic side</orientation>
    </subcellularLocation>
</comment>
<comment type="domain">
    <text evidence="5">The proline-rich region is an essential fusion motif involved in host membrane fusion leading to lysis.</text>
</comment>
<comment type="similarity">
    <text evidence="10">Belongs to the Lambdavirus o-spanin family.</text>
</comment>
<gene>
    <name type="primary">Rz1</name>
</gene>
<protein>
    <recommendedName>
        <fullName evidence="10">Spanin, outer lipoprotein subunit</fullName>
        <shortName evidence="8">o-spanin</shortName>
    </recommendedName>
    <alternativeName>
        <fullName evidence="7">Lysis protein Rz1</fullName>
    </alternativeName>
    <alternativeName>
        <fullName evidence="9">Outer membrane lipoprotein Rz1</fullName>
    </alternativeName>
</protein>